<accession>Q48PI2</accession>
<gene>
    <name evidence="1" type="primary">argS</name>
    <name type="ordered locus">PSPPH_0384</name>
</gene>
<feature type="chain" id="PRO_0000242071" description="Arginine--tRNA ligase">
    <location>
        <begin position="1"/>
        <end position="578"/>
    </location>
</feature>
<feature type="short sequence motif" description="'HIGH' region">
    <location>
        <begin position="127"/>
        <end position="137"/>
    </location>
</feature>
<sequence length="578" mass="63544">MKDTIRQLIQQALTRLVTEGVLPEGLTPAIQVENARDKTHGDFASNIAMMLAKPAGMKPRDLAEKLIAALPSDEQVSKVEIAGPGFLNFFQNTAALAARLDAALADAHLSVRKAGAVQRVVVDLSAPNLAKEMHVGHLRSTIIGDGVANVLTFLGDTVIRQNHVGDWGTQFGMLLAYLQEKPATSDELSDLENFYRAAKQRFDESEEFAERARGLVVKLQAGDAECLALWTRFKDISLSHCQETYERLNVKLTPADVMGESAYNDDLANVVNDLKATGLLVESNGAQCVFLEEFRTADDTPLPVIVQKAGGGYLYATTDLAAIRYRSKVLKADRVLYFVDQRQALHFQQVFEVARRAGFVHDGMQLEHMGFGTMNGADGRPFKTRDGGTVKLIDLLDEAEERAYTLVKEKNPEVAEAELRSIAKAVGISAVKYADLSKHRASDYSFNFDQMLSFEGNTAPYLLYAYTRVAGVFRKLGTPFDASKGQIVLAAPQEQELAARLAQFTETLNNVAEKGTPHVLCAYLYDLAGLFSSFYENCPILGAENPDQQQSRLRLAALTGRTLKQGLDLLGLETLERM</sequence>
<organism>
    <name type="scientific">Pseudomonas savastanoi pv. phaseolicola (strain 1448A / Race 6)</name>
    <name type="common">Pseudomonas syringae pv. phaseolicola (strain 1448A / Race 6)</name>
    <dbReference type="NCBI Taxonomy" id="264730"/>
    <lineage>
        <taxon>Bacteria</taxon>
        <taxon>Pseudomonadati</taxon>
        <taxon>Pseudomonadota</taxon>
        <taxon>Gammaproteobacteria</taxon>
        <taxon>Pseudomonadales</taxon>
        <taxon>Pseudomonadaceae</taxon>
        <taxon>Pseudomonas</taxon>
    </lineage>
</organism>
<name>SYR_PSE14</name>
<proteinExistence type="inferred from homology"/>
<protein>
    <recommendedName>
        <fullName evidence="1">Arginine--tRNA ligase</fullName>
        <ecNumber evidence="1">6.1.1.19</ecNumber>
    </recommendedName>
    <alternativeName>
        <fullName evidence="1">Arginyl-tRNA synthetase</fullName>
        <shortName evidence="1">ArgRS</shortName>
    </alternativeName>
</protein>
<dbReference type="EC" id="6.1.1.19" evidence="1"/>
<dbReference type="EMBL" id="CP000058">
    <property type="protein sequence ID" value="AAZ35677.1"/>
    <property type="molecule type" value="Genomic_DNA"/>
</dbReference>
<dbReference type="RefSeq" id="WP_011167461.1">
    <property type="nucleotide sequence ID" value="NC_005773.3"/>
</dbReference>
<dbReference type="SMR" id="Q48PI2"/>
<dbReference type="KEGG" id="psp:PSPPH_0384"/>
<dbReference type="eggNOG" id="COG0018">
    <property type="taxonomic scope" value="Bacteria"/>
</dbReference>
<dbReference type="HOGENOM" id="CLU_006406_5_1_6"/>
<dbReference type="Proteomes" id="UP000000551">
    <property type="component" value="Chromosome"/>
</dbReference>
<dbReference type="GO" id="GO:0005737">
    <property type="term" value="C:cytoplasm"/>
    <property type="evidence" value="ECO:0007669"/>
    <property type="project" value="UniProtKB-SubCell"/>
</dbReference>
<dbReference type="GO" id="GO:0004814">
    <property type="term" value="F:arginine-tRNA ligase activity"/>
    <property type="evidence" value="ECO:0007669"/>
    <property type="project" value="UniProtKB-UniRule"/>
</dbReference>
<dbReference type="GO" id="GO:0005524">
    <property type="term" value="F:ATP binding"/>
    <property type="evidence" value="ECO:0007669"/>
    <property type="project" value="UniProtKB-UniRule"/>
</dbReference>
<dbReference type="GO" id="GO:0006420">
    <property type="term" value="P:arginyl-tRNA aminoacylation"/>
    <property type="evidence" value="ECO:0007669"/>
    <property type="project" value="UniProtKB-UniRule"/>
</dbReference>
<dbReference type="CDD" id="cd07956">
    <property type="entry name" value="Anticodon_Ia_Arg"/>
    <property type="match status" value="1"/>
</dbReference>
<dbReference type="CDD" id="cd00671">
    <property type="entry name" value="ArgRS_core"/>
    <property type="match status" value="1"/>
</dbReference>
<dbReference type="FunFam" id="1.10.730.10:FF:000001">
    <property type="entry name" value="Arginine--tRNA ligase"/>
    <property type="match status" value="1"/>
</dbReference>
<dbReference type="FunFam" id="3.30.1360.70:FF:000003">
    <property type="entry name" value="Arginine--tRNA ligase"/>
    <property type="match status" value="1"/>
</dbReference>
<dbReference type="FunFam" id="3.40.50.620:FF:000030">
    <property type="entry name" value="Arginine--tRNA ligase"/>
    <property type="match status" value="1"/>
</dbReference>
<dbReference type="Gene3D" id="3.30.1360.70">
    <property type="entry name" value="Arginyl tRNA synthetase N-terminal domain"/>
    <property type="match status" value="1"/>
</dbReference>
<dbReference type="Gene3D" id="3.40.50.620">
    <property type="entry name" value="HUPs"/>
    <property type="match status" value="1"/>
</dbReference>
<dbReference type="Gene3D" id="1.10.730.10">
    <property type="entry name" value="Isoleucyl-tRNA Synthetase, Domain 1"/>
    <property type="match status" value="1"/>
</dbReference>
<dbReference type="HAMAP" id="MF_00123">
    <property type="entry name" value="Arg_tRNA_synth"/>
    <property type="match status" value="1"/>
</dbReference>
<dbReference type="InterPro" id="IPR001412">
    <property type="entry name" value="aa-tRNA-synth_I_CS"/>
</dbReference>
<dbReference type="InterPro" id="IPR001278">
    <property type="entry name" value="Arg-tRNA-ligase"/>
</dbReference>
<dbReference type="InterPro" id="IPR005148">
    <property type="entry name" value="Arg-tRNA-synth_N"/>
</dbReference>
<dbReference type="InterPro" id="IPR036695">
    <property type="entry name" value="Arg-tRNA-synth_N_sf"/>
</dbReference>
<dbReference type="InterPro" id="IPR035684">
    <property type="entry name" value="ArgRS_core"/>
</dbReference>
<dbReference type="InterPro" id="IPR008909">
    <property type="entry name" value="DALR_anticod-bd"/>
</dbReference>
<dbReference type="InterPro" id="IPR014729">
    <property type="entry name" value="Rossmann-like_a/b/a_fold"/>
</dbReference>
<dbReference type="InterPro" id="IPR009080">
    <property type="entry name" value="tRNAsynth_Ia_anticodon-bd"/>
</dbReference>
<dbReference type="NCBIfam" id="TIGR00456">
    <property type="entry name" value="argS"/>
    <property type="match status" value="1"/>
</dbReference>
<dbReference type="PANTHER" id="PTHR11956:SF5">
    <property type="entry name" value="ARGININE--TRNA LIGASE, CYTOPLASMIC"/>
    <property type="match status" value="1"/>
</dbReference>
<dbReference type="PANTHER" id="PTHR11956">
    <property type="entry name" value="ARGINYL-TRNA SYNTHETASE"/>
    <property type="match status" value="1"/>
</dbReference>
<dbReference type="Pfam" id="PF03485">
    <property type="entry name" value="Arg_tRNA_synt_N"/>
    <property type="match status" value="1"/>
</dbReference>
<dbReference type="Pfam" id="PF05746">
    <property type="entry name" value="DALR_1"/>
    <property type="match status" value="1"/>
</dbReference>
<dbReference type="Pfam" id="PF00750">
    <property type="entry name" value="tRNA-synt_1d"/>
    <property type="match status" value="1"/>
</dbReference>
<dbReference type="PRINTS" id="PR01038">
    <property type="entry name" value="TRNASYNTHARG"/>
</dbReference>
<dbReference type="SMART" id="SM01016">
    <property type="entry name" value="Arg_tRNA_synt_N"/>
    <property type="match status" value="1"/>
</dbReference>
<dbReference type="SMART" id="SM00836">
    <property type="entry name" value="DALR_1"/>
    <property type="match status" value="1"/>
</dbReference>
<dbReference type="SUPFAM" id="SSF47323">
    <property type="entry name" value="Anticodon-binding domain of a subclass of class I aminoacyl-tRNA synthetases"/>
    <property type="match status" value="1"/>
</dbReference>
<dbReference type="SUPFAM" id="SSF55190">
    <property type="entry name" value="Arginyl-tRNA synthetase (ArgRS), N-terminal 'additional' domain"/>
    <property type="match status" value="1"/>
</dbReference>
<dbReference type="SUPFAM" id="SSF52374">
    <property type="entry name" value="Nucleotidylyl transferase"/>
    <property type="match status" value="1"/>
</dbReference>
<dbReference type="PROSITE" id="PS00178">
    <property type="entry name" value="AA_TRNA_LIGASE_I"/>
    <property type="match status" value="1"/>
</dbReference>
<keyword id="KW-0030">Aminoacyl-tRNA synthetase</keyword>
<keyword id="KW-0067">ATP-binding</keyword>
<keyword id="KW-0963">Cytoplasm</keyword>
<keyword id="KW-0436">Ligase</keyword>
<keyword id="KW-0547">Nucleotide-binding</keyword>
<keyword id="KW-0648">Protein biosynthesis</keyword>
<evidence type="ECO:0000255" key="1">
    <source>
        <dbReference type="HAMAP-Rule" id="MF_00123"/>
    </source>
</evidence>
<reference key="1">
    <citation type="journal article" date="2005" name="J. Bacteriol.">
        <title>Whole-genome sequence analysis of Pseudomonas syringae pv. phaseolicola 1448A reveals divergence among pathovars in genes involved in virulence and transposition.</title>
        <authorList>
            <person name="Joardar V."/>
            <person name="Lindeberg M."/>
            <person name="Jackson R.W."/>
            <person name="Selengut J."/>
            <person name="Dodson R."/>
            <person name="Brinkac L.M."/>
            <person name="Daugherty S.C."/>
            <person name="DeBoy R.T."/>
            <person name="Durkin A.S."/>
            <person name="Gwinn Giglio M."/>
            <person name="Madupu R."/>
            <person name="Nelson W.C."/>
            <person name="Rosovitz M.J."/>
            <person name="Sullivan S.A."/>
            <person name="Crabtree J."/>
            <person name="Creasy T."/>
            <person name="Davidsen T.M."/>
            <person name="Haft D.H."/>
            <person name="Zafar N."/>
            <person name="Zhou L."/>
            <person name="Halpin R."/>
            <person name="Holley T."/>
            <person name="Khouri H.M."/>
            <person name="Feldblyum T.V."/>
            <person name="White O."/>
            <person name="Fraser C.M."/>
            <person name="Chatterjee A.K."/>
            <person name="Cartinhour S."/>
            <person name="Schneider D."/>
            <person name="Mansfield J.W."/>
            <person name="Collmer A."/>
            <person name="Buell R."/>
        </authorList>
    </citation>
    <scope>NUCLEOTIDE SEQUENCE [LARGE SCALE GENOMIC DNA]</scope>
    <source>
        <strain>1448A / Race 6</strain>
    </source>
</reference>
<comment type="catalytic activity">
    <reaction evidence="1">
        <text>tRNA(Arg) + L-arginine + ATP = L-arginyl-tRNA(Arg) + AMP + diphosphate</text>
        <dbReference type="Rhea" id="RHEA:20301"/>
        <dbReference type="Rhea" id="RHEA-COMP:9658"/>
        <dbReference type="Rhea" id="RHEA-COMP:9673"/>
        <dbReference type="ChEBI" id="CHEBI:30616"/>
        <dbReference type="ChEBI" id="CHEBI:32682"/>
        <dbReference type="ChEBI" id="CHEBI:33019"/>
        <dbReference type="ChEBI" id="CHEBI:78442"/>
        <dbReference type="ChEBI" id="CHEBI:78513"/>
        <dbReference type="ChEBI" id="CHEBI:456215"/>
        <dbReference type="EC" id="6.1.1.19"/>
    </reaction>
</comment>
<comment type="subunit">
    <text evidence="1">Monomer.</text>
</comment>
<comment type="subcellular location">
    <subcellularLocation>
        <location evidence="1">Cytoplasm</location>
    </subcellularLocation>
</comment>
<comment type="similarity">
    <text evidence="1">Belongs to the class-I aminoacyl-tRNA synthetase family.</text>
</comment>